<comment type="function">
    <text evidence="1">One of the primary rRNA binding proteins, it binds directly to 16S rRNA where it nucleates assembly of the body of the 30S subunit.</text>
</comment>
<comment type="function">
    <text evidence="1">With S5 and S12 plays an important role in translational accuracy.</text>
</comment>
<comment type="subunit">
    <text evidence="1">Part of the 30S ribosomal subunit. Contacts protein S5. The interaction surface between S4 and S5 is involved in control of translational fidelity.</text>
</comment>
<comment type="similarity">
    <text evidence="1">Belongs to the universal ribosomal protein uS4 family.</text>
</comment>
<reference key="1">
    <citation type="journal article" date="2009" name="Proc. Natl. Acad. Sci. U.S.A.">
        <title>Characterizing a model human gut microbiota composed of members of its two dominant bacterial phyla.</title>
        <authorList>
            <person name="Mahowald M.A."/>
            <person name="Rey F.E."/>
            <person name="Seedorf H."/>
            <person name="Turnbaugh P.J."/>
            <person name="Fulton R.S."/>
            <person name="Wollam A."/>
            <person name="Shah N."/>
            <person name="Wang C."/>
            <person name="Magrini V."/>
            <person name="Wilson R.K."/>
            <person name="Cantarel B.L."/>
            <person name="Coutinho P.M."/>
            <person name="Henrissat B."/>
            <person name="Crock L.W."/>
            <person name="Russell A."/>
            <person name="Verberkmoes N.C."/>
            <person name="Hettich R.L."/>
            <person name="Gordon J.I."/>
        </authorList>
    </citation>
    <scope>NUCLEOTIDE SEQUENCE [LARGE SCALE GENOMIC DNA]</scope>
    <source>
        <strain>ATCC 27750 / DSM 3376 / VPI C15-48 / C15-B4</strain>
    </source>
</reference>
<organism>
    <name type="scientific">Lachnospira eligens (strain ATCC 27750 / DSM 3376 / VPI C15-48 / C15-B4)</name>
    <name type="common">Eubacterium eligens</name>
    <dbReference type="NCBI Taxonomy" id="515620"/>
    <lineage>
        <taxon>Bacteria</taxon>
        <taxon>Bacillati</taxon>
        <taxon>Bacillota</taxon>
        <taxon>Clostridia</taxon>
        <taxon>Lachnospirales</taxon>
        <taxon>Lachnospiraceae</taxon>
        <taxon>Lachnospira</taxon>
    </lineage>
</organism>
<name>RS4_LACE2</name>
<protein>
    <recommendedName>
        <fullName evidence="1">Small ribosomal subunit protein uS4</fullName>
    </recommendedName>
    <alternativeName>
        <fullName evidence="2">30S ribosomal protein S4</fullName>
    </alternativeName>
</protein>
<evidence type="ECO:0000255" key="1">
    <source>
        <dbReference type="HAMAP-Rule" id="MF_01306"/>
    </source>
</evidence>
<evidence type="ECO:0000305" key="2"/>
<accession>C4Z2V6</accession>
<dbReference type="EMBL" id="CP001104">
    <property type="protein sequence ID" value="ACR71361.1"/>
    <property type="molecule type" value="Genomic_DNA"/>
</dbReference>
<dbReference type="RefSeq" id="WP_012738598.1">
    <property type="nucleotide sequence ID" value="NC_012778.1"/>
</dbReference>
<dbReference type="SMR" id="C4Z2V6"/>
<dbReference type="STRING" id="515620.EUBELI_00325"/>
<dbReference type="GeneID" id="41355099"/>
<dbReference type="KEGG" id="eel:EUBELI_00325"/>
<dbReference type="eggNOG" id="COG0522">
    <property type="taxonomic scope" value="Bacteria"/>
</dbReference>
<dbReference type="HOGENOM" id="CLU_092403_0_2_9"/>
<dbReference type="Proteomes" id="UP000001476">
    <property type="component" value="Chromosome"/>
</dbReference>
<dbReference type="GO" id="GO:0015935">
    <property type="term" value="C:small ribosomal subunit"/>
    <property type="evidence" value="ECO:0007669"/>
    <property type="project" value="InterPro"/>
</dbReference>
<dbReference type="GO" id="GO:0019843">
    <property type="term" value="F:rRNA binding"/>
    <property type="evidence" value="ECO:0007669"/>
    <property type="project" value="UniProtKB-UniRule"/>
</dbReference>
<dbReference type="GO" id="GO:0003735">
    <property type="term" value="F:structural constituent of ribosome"/>
    <property type="evidence" value="ECO:0007669"/>
    <property type="project" value="InterPro"/>
</dbReference>
<dbReference type="GO" id="GO:0042274">
    <property type="term" value="P:ribosomal small subunit biogenesis"/>
    <property type="evidence" value="ECO:0007669"/>
    <property type="project" value="TreeGrafter"/>
</dbReference>
<dbReference type="GO" id="GO:0006412">
    <property type="term" value="P:translation"/>
    <property type="evidence" value="ECO:0007669"/>
    <property type="project" value="UniProtKB-UniRule"/>
</dbReference>
<dbReference type="CDD" id="cd00165">
    <property type="entry name" value="S4"/>
    <property type="match status" value="1"/>
</dbReference>
<dbReference type="FunFam" id="3.10.290.10:FF:000001">
    <property type="entry name" value="30S ribosomal protein S4"/>
    <property type="match status" value="1"/>
</dbReference>
<dbReference type="Gene3D" id="1.10.1050.10">
    <property type="entry name" value="Ribosomal Protein S4 Delta 41, Chain A, domain 1"/>
    <property type="match status" value="1"/>
</dbReference>
<dbReference type="Gene3D" id="3.10.290.10">
    <property type="entry name" value="RNA-binding S4 domain"/>
    <property type="match status" value="1"/>
</dbReference>
<dbReference type="HAMAP" id="MF_01306_B">
    <property type="entry name" value="Ribosomal_uS4_B"/>
    <property type="match status" value="1"/>
</dbReference>
<dbReference type="InterPro" id="IPR022801">
    <property type="entry name" value="Ribosomal_uS4"/>
</dbReference>
<dbReference type="InterPro" id="IPR005709">
    <property type="entry name" value="Ribosomal_uS4_bac-type"/>
</dbReference>
<dbReference type="InterPro" id="IPR018079">
    <property type="entry name" value="Ribosomal_uS4_CS"/>
</dbReference>
<dbReference type="InterPro" id="IPR001912">
    <property type="entry name" value="Ribosomal_uS4_N"/>
</dbReference>
<dbReference type="InterPro" id="IPR002942">
    <property type="entry name" value="S4_RNA-bd"/>
</dbReference>
<dbReference type="InterPro" id="IPR036986">
    <property type="entry name" value="S4_RNA-bd_sf"/>
</dbReference>
<dbReference type="NCBIfam" id="NF003717">
    <property type="entry name" value="PRK05327.1"/>
    <property type="match status" value="1"/>
</dbReference>
<dbReference type="NCBIfam" id="TIGR01017">
    <property type="entry name" value="rpsD_bact"/>
    <property type="match status" value="1"/>
</dbReference>
<dbReference type="PANTHER" id="PTHR11831">
    <property type="entry name" value="30S 40S RIBOSOMAL PROTEIN"/>
    <property type="match status" value="1"/>
</dbReference>
<dbReference type="PANTHER" id="PTHR11831:SF4">
    <property type="entry name" value="SMALL RIBOSOMAL SUBUNIT PROTEIN US4M"/>
    <property type="match status" value="1"/>
</dbReference>
<dbReference type="Pfam" id="PF00163">
    <property type="entry name" value="Ribosomal_S4"/>
    <property type="match status" value="1"/>
</dbReference>
<dbReference type="Pfam" id="PF01479">
    <property type="entry name" value="S4"/>
    <property type="match status" value="1"/>
</dbReference>
<dbReference type="SMART" id="SM01390">
    <property type="entry name" value="Ribosomal_S4"/>
    <property type="match status" value="1"/>
</dbReference>
<dbReference type="SMART" id="SM00363">
    <property type="entry name" value="S4"/>
    <property type="match status" value="1"/>
</dbReference>
<dbReference type="SUPFAM" id="SSF55174">
    <property type="entry name" value="Alpha-L RNA-binding motif"/>
    <property type="match status" value="1"/>
</dbReference>
<dbReference type="PROSITE" id="PS00632">
    <property type="entry name" value="RIBOSOMAL_S4"/>
    <property type="match status" value="1"/>
</dbReference>
<dbReference type="PROSITE" id="PS50889">
    <property type="entry name" value="S4"/>
    <property type="match status" value="1"/>
</dbReference>
<gene>
    <name evidence="1" type="primary">rpsD</name>
    <name type="ordered locus">EUBELI_00325</name>
</gene>
<feature type="chain" id="PRO_1000214288" description="Small ribosomal subunit protein uS4">
    <location>
        <begin position="1"/>
        <end position="197"/>
    </location>
</feature>
<feature type="domain" description="S4 RNA-binding" evidence="1">
    <location>
        <begin position="87"/>
        <end position="147"/>
    </location>
</feature>
<proteinExistence type="inferred from homology"/>
<sequence length="197" mass="22715">MAVNRTPVLKRCRSLEMDPVYLGIDKKSRRKAKNAGRKVSEYGMQLREKQKAKFIYGVLEKPFRNYYKKAERQKGMTGENLMIMLELRLDNVLFRLGFARTRKEARQIVDHKHVLVNGKCVNIPSYLVKAGDVIEIREKSKSSARYKEILESTNGRLVPEWLEADADALKGSVKSIPTREVIDVPVNEMLIVELYSK</sequence>
<keyword id="KW-1185">Reference proteome</keyword>
<keyword id="KW-0687">Ribonucleoprotein</keyword>
<keyword id="KW-0689">Ribosomal protein</keyword>
<keyword id="KW-0694">RNA-binding</keyword>
<keyword id="KW-0699">rRNA-binding</keyword>